<reference key="1">
    <citation type="journal article" date="2004" name="J. Biol. Chem.">
        <title>Purification of the Arabidopsis 26 S proteasome: biochemical and molecular analyses revealed the presence of multiple isoforms.</title>
        <authorList>
            <person name="Yang P."/>
            <person name="Fu H."/>
            <person name="Walker J."/>
            <person name="Papa C.M."/>
            <person name="Smalle J."/>
            <person name="Ju Y.-M."/>
            <person name="Vierstra R.D."/>
        </authorList>
    </citation>
    <scope>NUCLEOTIDE SEQUENCE [MRNA]</scope>
    <scope>SUBUNIT</scope>
    <scope>IDENTIFICATION BY MASS SPECTROMETRY</scope>
    <scope>TISSUE SPECIFICITY</scope>
    <source>
        <strain>cv. Columbia</strain>
    </source>
</reference>
<reference key="2">
    <citation type="journal article" date="1999" name="Nature">
        <title>Sequence and analysis of chromosome 2 of the plant Arabidopsis thaliana.</title>
        <authorList>
            <person name="Lin X."/>
            <person name="Kaul S."/>
            <person name="Rounsley S.D."/>
            <person name="Shea T.P."/>
            <person name="Benito M.-I."/>
            <person name="Town C.D."/>
            <person name="Fujii C.Y."/>
            <person name="Mason T.M."/>
            <person name="Bowman C.L."/>
            <person name="Barnstead M.E."/>
            <person name="Feldblyum T.V."/>
            <person name="Buell C.R."/>
            <person name="Ketchum K.A."/>
            <person name="Lee J.J."/>
            <person name="Ronning C.M."/>
            <person name="Koo H.L."/>
            <person name="Moffat K.S."/>
            <person name="Cronin L.A."/>
            <person name="Shen M."/>
            <person name="Pai G."/>
            <person name="Van Aken S."/>
            <person name="Umayam L."/>
            <person name="Tallon L.J."/>
            <person name="Gill J.E."/>
            <person name="Adams M.D."/>
            <person name="Carrera A.J."/>
            <person name="Creasy T.H."/>
            <person name="Goodman H.M."/>
            <person name="Somerville C.R."/>
            <person name="Copenhaver G.P."/>
            <person name="Preuss D."/>
            <person name="Nierman W.C."/>
            <person name="White O."/>
            <person name="Eisen J.A."/>
            <person name="Salzberg S.L."/>
            <person name="Fraser C.M."/>
            <person name="Venter J.C."/>
        </authorList>
    </citation>
    <scope>NUCLEOTIDE SEQUENCE [LARGE SCALE GENOMIC DNA]</scope>
    <source>
        <strain>cv. Columbia</strain>
    </source>
</reference>
<reference key="3">
    <citation type="journal article" date="2017" name="Plant J.">
        <title>Araport11: a complete reannotation of the Arabidopsis thaliana reference genome.</title>
        <authorList>
            <person name="Cheng C.Y."/>
            <person name="Krishnakumar V."/>
            <person name="Chan A.P."/>
            <person name="Thibaud-Nissen F."/>
            <person name="Schobel S."/>
            <person name="Town C.D."/>
        </authorList>
    </citation>
    <scope>GENOME REANNOTATION</scope>
    <source>
        <strain>cv. Columbia</strain>
    </source>
</reference>
<reference key="4">
    <citation type="journal article" date="2003" name="Science">
        <title>Empirical analysis of transcriptional activity in the Arabidopsis genome.</title>
        <authorList>
            <person name="Yamada K."/>
            <person name="Lim J."/>
            <person name="Dale J.M."/>
            <person name="Chen H."/>
            <person name="Shinn P."/>
            <person name="Palm C.J."/>
            <person name="Southwick A.M."/>
            <person name="Wu H.C."/>
            <person name="Kim C.J."/>
            <person name="Nguyen M."/>
            <person name="Pham P.K."/>
            <person name="Cheuk R.F."/>
            <person name="Karlin-Newmann G."/>
            <person name="Liu S.X."/>
            <person name="Lam B."/>
            <person name="Sakano H."/>
            <person name="Wu T."/>
            <person name="Yu G."/>
            <person name="Miranda M."/>
            <person name="Quach H.L."/>
            <person name="Tripp M."/>
            <person name="Chang C.H."/>
            <person name="Lee J.M."/>
            <person name="Toriumi M.J."/>
            <person name="Chan M.M."/>
            <person name="Tang C.C."/>
            <person name="Onodera C.S."/>
            <person name="Deng J.M."/>
            <person name="Akiyama K."/>
            <person name="Ansari Y."/>
            <person name="Arakawa T."/>
            <person name="Banh J."/>
            <person name="Banno F."/>
            <person name="Bowser L."/>
            <person name="Brooks S.Y."/>
            <person name="Carninci P."/>
            <person name="Chao Q."/>
            <person name="Choy N."/>
            <person name="Enju A."/>
            <person name="Goldsmith A.D."/>
            <person name="Gurjal M."/>
            <person name="Hansen N.F."/>
            <person name="Hayashizaki Y."/>
            <person name="Johnson-Hopson C."/>
            <person name="Hsuan V.W."/>
            <person name="Iida K."/>
            <person name="Karnes M."/>
            <person name="Khan S."/>
            <person name="Koesema E."/>
            <person name="Ishida J."/>
            <person name="Jiang P.X."/>
            <person name="Jones T."/>
            <person name="Kawai J."/>
            <person name="Kamiya A."/>
            <person name="Meyers C."/>
            <person name="Nakajima M."/>
            <person name="Narusaka M."/>
            <person name="Seki M."/>
            <person name="Sakurai T."/>
            <person name="Satou M."/>
            <person name="Tamse R."/>
            <person name="Vaysberg M."/>
            <person name="Wallender E.K."/>
            <person name="Wong C."/>
            <person name="Yamamura Y."/>
            <person name="Yuan S."/>
            <person name="Shinozaki K."/>
            <person name="Davis R.W."/>
            <person name="Theologis A."/>
            <person name="Ecker J.R."/>
        </authorList>
    </citation>
    <scope>NUCLEOTIDE SEQUENCE [LARGE SCALE MRNA]</scope>
    <source>
        <strain>cv. Columbia</strain>
    </source>
</reference>
<reference key="5">
    <citation type="submission" date="2005-03" db="EMBL/GenBank/DDBJ databases">
        <title>Large-scale analysis of RIKEN Arabidopsis full-length (RAFL) cDNAs.</title>
        <authorList>
            <person name="Totoki Y."/>
            <person name="Seki M."/>
            <person name="Ishida J."/>
            <person name="Nakajima M."/>
            <person name="Enju A."/>
            <person name="Kamiya A."/>
            <person name="Narusaka M."/>
            <person name="Shin-i T."/>
            <person name="Nakagawa M."/>
            <person name="Sakamoto N."/>
            <person name="Oishi K."/>
            <person name="Kohara Y."/>
            <person name="Kobayashi M."/>
            <person name="Toyoda A."/>
            <person name="Sakaki Y."/>
            <person name="Sakurai T."/>
            <person name="Iida K."/>
            <person name="Akiyama K."/>
            <person name="Satou M."/>
            <person name="Toyoda T."/>
            <person name="Konagaya A."/>
            <person name="Carninci P."/>
            <person name="Kawai J."/>
            <person name="Hayashizaki Y."/>
            <person name="Shinozaki K."/>
        </authorList>
    </citation>
    <scope>NUCLEOTIDE SEQUENCE [LARGE SCALE MRNA] OF 740-1004</scope>
    <source>
        <strain>cv. Columbia</strain>
    </source>
</reference>
<reference key="6">
    <citation type="journal article" date="2008" name="J. Proteome Res.">
        <title>Site-specific phosphorylation profiling of Arabidopsis proteins by mass spectrometry and peptide chip analysis.</title>
        <authorList>
            <person name="de la Fuente van Bentem S."/>
            <person name="Anrather D."/>
            <person name="Dohnal I."/>
            <person name="Roitinger E."/>
            <person name="Csaszar E."/>
            <person name="Joore J."/>
            <person name="Buijnink J."/>
            <person name="Carreri A."/>
            <person name="Forzani C."/>
            <person name="Lorkovic Z.J."/>
            <person name="Barta A."/>
            <person name="Lecourieux D."/>
            <person name="Verhounig A."/>
            <person name="Jonak C."/>
            <person name="Hirt H."/>
        </authorList>
    </citation>
    <scope>PHOSPHORYLATION [LARGE SCALE ANALYSIS] AT SER-896</scope>
    <scope>IDENTIFICATION BY MASS SPECTROMETRY [LARGE SCALE ANALYSIS]</scope>
    <source>
        <tissue>Root</tissue>
    </source>
</reference>
<reference key="7">
    <citation type="journal article" date="2009" name="J. Proteomics">
        <title>Phosphoproteomic analysis of nuclei-enriched fractions from Arabidopsis thaliana.</title>
        <authorList>
            <person name="Jones A.M.E."/>
            <person name="MacLean D."/>
            <person name="Studholme D.J."/>
            <person name="Serna-Sanz A."/>
            <person name="Andreasson E."/>
            <person name="Rathjen J.P."/>
            <person name="Peck S.C."/>
        </authorList>
    </citation>
    <scope>PHOSPHORYLATION [LARGE SCALE ANALYSIS] AT SER-896</scope>
    <scope>IDENTIFICATION BY MASS SPECTROMETRY [LARGE SCALE ANALYSIS]</scope>
    <source>
        <strain>cv. Columbia</strain>
    </source>
</reference>
<reference key="8">
    <citation type="journal article" date="2009" name="Plant Physiol.">
        <title>Large-scale Arabidopsis phosphoproteome profiling reveals novel chloroplast kinase substrates and phosphorylation networks.</title>
        <authorList>
            <person name="Reiland S."/>
            <person name="Messerli G."/>
            <person name="Baerenfaller K."/>
            <person name="Gerrits B."/>
            <person name="Endler A."/>
            <person name="Grossmann J."/>
            <person name="Gruissem W."/>
            <person name="Baginsky S."/>
        </authorList>
    </citation>
    <scope>PHOSPHORYLATION [LARGE SCALE ANALYSIS] AT SER-896</scope>
    <scope>IDENTIFICATION BY MASS SPECTROMETRY [LARGE SCALE ANALYSIS]</scope>
</reference>
<reference key="9">
    <citation type="journal article" date="2010" name="J. Biol. Chem.">
        <title>Affinity purification of the Arabidopsis 26 S proteasome reveals a diverse array of plant proteolytic complexes.</title>
        <authorList>
            <person name="Book A.J."/>
            <person name="Gladman N.P."/>
            <person name="Lee S.S."/>
            <person name="Scalf M."/>
            <person name="Smith L.M."/>
            <person name="Vierstra R.D."/>
        </authorList>
    </citation>
    <scope>IDENTIFICATION BY MASS SPECTROMETRY</scope>
    <scope>CHARACTERIZATION OF THE 26S PROTEASOME COMPLEX</scope>
    <scope>SUBUNIT</scope>
    <scope>UBIQUITINATION AT LYS-166</scope>
</reference>
<reference key="10">
    <citation type="journal article" date="2012" name="Mol. Cell. Proteomics">
        <title>Comparative large-scale characterisation of plant vs. mammal proteins reveals similar and idiosyncratic N-alpha acetylation features.</title>
        <authorList>
            <person name="Bienvenut W.V."/>
            <person name="Sumpton D."/>
            <person name="Martinez A."/>
            <person name="Lilla S."/>
            <person name="Espagne C."/>
            <person name="Meinnel T."/>
            <person name="Giglione C."/>
        </authorList>
    </citation>
    <scope>ACETYLATION [LARGE SCALE ANALYSIS] AT ALA-2</scope>
    <scope>CLEAVAGE OF INITIATOR METHIONINE [LARGE SCALE ANALYSIS]</scope>
    <scope>IDENTIFICATION BY MASS SPECTROMETRY [LARGE SCALE ANALYSIS]</scope>
</reference>
<dbReference type="EMBL" id="AY230830">
    <property type="protein sequence ID" value="AAP86657.1"/>
    <property type="molecule type" value="mRNA"/>
</dbReference>
<dbReference type="EMBL" id="AC003974">
    <property type="protein sequence ID" value="AAC04490.1"/>
    <property type="molecule type" value="Genomic_DNA"/>
</dbReference>
<dbReference type="EMBL" id="CP002685">
    <property type="protein sequence ID" value="AEC08730.1"/>
    <property type="molecule type" value="Genomic_DNA"/>
</dbReference>
<dbReference type="EMBL" id="AY099861">
    <property type="protein sequence ID" value="AAM20712.1"/>
    <property type="molecule type" value="mRNA"/>
</dbReference>
<dbReference type="EMBL" id="AK220772">
    <property type="protein sequence ID" value="BAD93983.1"/>
    <property type="molecule type" value="mRNA"/>
</dbReference>
<dbReference type="PIR" id="T00795">
    <property type="entry name" value="T00795"/>
</dbReference>
<dbReference type="RefSeq" id="NP_180832.1">
    <property type="nucleotide sequence ID" value="NM_128832.5"/>
</dbReference>
<dbReference type="SMR" id="O48844"/>
<dbReference type="BioGRID" id="3180">
    <property type="interactions" value="101"/>
</dbReference>
<dbReference type="FunCoup" id="O48844">
    <property type="interactions" value="5344"/>
</dbReference>
<dbReference type="IntAct" id="O48844">
    <property type="interactions" value="3"/>
</dbReference>
<dbReference type="STRING" id="3702.O48844"/>
<dbReference type="GlyGen" id="O48844">
    <property type="glycosylation" value="1 site"/>
</dbReference>
<dbReference type="iPTMnet" id="O48844"/>
<dbReference type="MetOSite" id="O48844"/>
<dbReference type="PaxDb" id="3702-AT2G32730.1"/>
<dbReference type="ProMEX" id="O48844"/>
<dbReference type="ProteomicsDB" id="226432"/>
<dbReference type="EnsemblPlants" id="AT2G32730.1">
    <property type="protein sequence ID" value="AT2G32730.1"/>
    <property type="gene ID" value="AT2G32730"/>
</dbReference>
<dbReference type="GeneID" id="817833"/>
<dbReference type="Gramene" id="AT2G32730.1">
    <property type="protein sequence ID" value="AT2G32730.1"/>
    <property type="gene ID" value="AT2G32730"/>
</dbReference>
<dbReference type="KEGG" id="ath:AT2G32730"/>
<dbReference type="Araport" id="AT2G32730"/>
<dbReference type="TAIR" id="AT2G32730"/>
<dbReference type="eggNOG" id="KOG2062">
    <property type="taxonomic scope" value="Eukaryota"/>
</dbReference>
<dbReference type="HOGENOM" id="CLU_002323_0_0_1"/>
<dbReference type="InParanoid" id="O48844"/>
<dbReference type="OMA" id="IMFGRQE"/>
<dbReference type="OrthoDB" id="261572at2759"/>
<dbReference type="PhylomeDB" id="O48844"/>
<dbReference type="PRO" id="PR:O48844"/>
<dbReference type="Proteomes" id="UP000006548">
    <property type="component" value="Chromosome 2"/>
</dbReference>
<dbReference type="ExpressionAtlas" id="O48844">
    <property type="expression patterns" value="baseline and differential"/>
</dbReference>
<dbReference type="GO" id="GO:0005783">
    <property type="term" value="C:endoplasmic reticulum"/>
    <property type="evidence" value="ECO:0007005"/>
    <property type="project" value="TAIR"/>
</dbReference>
<dbReference type="GO" id="GO:0000502">
    <property type="term" value="C:proteasome complex"/>
    <property type="evidence" value="ECO:0000314"/>
    <property type="project" value="TAIR"/>
</dbReference>
<dbReference type="GO" id="GO:0030234">
    <property type="term" value="F:enzyme regulator activity"/>
    <property type="evidence" value="ECO:0007669"/>
    <property type="project" value="InterPro"/>
</dbReference>
<dbReference type="GO" id="GO:0042176">
    <property type="term" value="P:regulation of protein catabolic process"/>
    <property type="evidence" value="ECO:0007669"/>
    <property type="project" value="InterPro"/>
</dbReference>
<dbReference type="FunFam" id="1.25.10.10:FF:000048">
    <property type="entry name" value="26S proteasome non-ATPase regulatory subunit 1 homolog"/>
    <property type="match status" value="1"/>
</dbReference>
<dbReference type="Gene3D" id="1.25.10.10">
    <property type="entry name" value="Leucine-rich Repeat Variant"/>
    <property type="match status" value="1"/>
</dbReference>
<dbReference type="InterPro" id="IPR016642">
    <property type="entry name" value="26S_Psome_Rpn2"/>
</dbReference>
<dbReference type="InterPro" id="IPR011989">
    <property type="entry name" value="ARM-like"/>
</dbReference>
<dbReference type="InterPro" id="IPR016024">
    <property type="entry name" value="ARM-type_fold"/>
</dbReference>
<dbReference type="InterPro" id="IPR002015">
    <property type="entry name" value="Proteasome/cyclosome_rpt"/>
</dbReference>
<dbReference type="InterPro" id="IPR048570">
    <property type="entry name" value="PSMD1_RPN2_N"/>
</dbReference>
<dbReference type="InterPro" id="IPR040623">
    <property type="entry name" value="RPN2_C"/>
</dbReference>
<dbReference type="PANTHER" id="PTHR10943">
    <property type="entry name" value="26S PROTEASOME NON-ATPASE REGULATORY SUBUNIT"/>
    <property type="match status" value="1"/>
</dbReference>
<dbReference type="PANTHER" id="PTHR10943:SF2">
    <property type="entry name" value="26S PROTEASOME NON-ATPASE REGULATORY SUBUNIT 1"/>
    <property type="match status" value="1"/>
</dbReference>
<dbReference type="Pfam" id="PF13646">
    <property type="entry name" value="HEAT_2"/>
    <property type="match status" value="1"/>
</dbReference>
<dbReference type="Pfam" id="PF01851">
    <property type="entry name" value="PC_rep"/>
    <property type="match status" value="1"/>
</dbReference>
<dbReference type="Pfam" id="PF18004">
    <property type="entry name" value="RPN2_C"/>
    <property type="match status" value="1"/>
</dbReference>
<dbReference type="Pfam" id="PF21505">
    <property type="entry name" value="RPN2_N"/>
    <property type="match status" value="1"/>
</dbReference>
<dbReference type="PIRSF" id="PIRSF015947">
    <property type="entry name" value="26S_Psome_Rpn2"/>
    <property type="match status" value="1"/>
</dbReference>
<dbReference type="SUPFAM" id="SSF48371">
    <property type="entry name" value="ARM repeat"/>
    <property type="match status" value="1"/>
</dbReference>
<name>PSD1A_ARATH</name>
<accession>O48844</accession>
<accession>Q570D7</accession>
<accession>Q6XJG7</accession>
<gene>
    <name type="primary">RPN2A</name>
    <name type="ordered locus">At2g32730</name>
    <name type="ORF">F24L7.13</name>
</gene>
<comment type="function">
    <text evidence="1">Acts as a regulatory subunit of the 26 proteasome which is involved in the ATP-dependent degradation of ubiquitinated proteins.</text>
</comment>
<comment type="subunit">
    <text evidence="3 4">Component of the 19S regulatory particle (RP/PA700) base subcomplex of the 26S proteasome. The 26S proteasome is composed of a core protease (CP), known as the 20S proteasome, capped at one or both ends by the 19S regulatory particle (RP/PA700). The RP/PA700 complex is composed of at least 17 different subunits in two subcomplexes, the base and the lid, which form the portions proximal and distal to the 20S proteolytic core, respectively.</text>
</comment>
<comment type="tissue specificity">
    <text evidence="3">Ubiquitous with highest expression in flowers.</text>
</comment>
<comment type="similarity">
    <text evidence="5">Belongs to the proteasome subunit S1 family.</text>
</comment>
<feature type="initiator methionine" description="Removed" evidence="9">
    <location>
        <position position="1"/>
    </location>
</feature>
<feature type="chain" id="PRO_0000423176" description="26S proteasome non-ATPase regulatory subunit 1 homolog A">
    <location>
        <begin position="2"/>
        <end position="1004"/>
    </location>
</feature>
<feature type="repeat" description="PC 1">
    <location>
        <begin position="412"/>
        <end position="447"/>
    </location>
</feature>
<feature type="repeat" description="PC 2">
    <location>
        <begin position="452"/>
        <end position="485"/>
    </location>
</feature>
<feature type="repeat" description="PC 3">
    <location>
        <begin position="487"/>
        <end position="521"/>
    </location>
</feature>
<feature type="repeat" description="PC 4">
    <location>
        <begin position="522"/>
        <end position="555"/>
    </location>
</feature>
<feature type="repeat" description="PC 5">
    <location>
        <begin position="557"/>
        <end position="590"/>
    </location>
</feature>
<feature type="repeat" description="PC 6">
    <location>
        <begin position="591"/>
        <end position="626"/>
    </location>
</feature>
<feature type="repeat" description="PC 7">
    <location>
        <begin position="627"/>
        <end position="659"/>
    </location>
</feature>
<feature type="repeat" description="PC 8">
    <location>
        <begin position="661"/>
        <end position="695"/>
    </location>
</feature>
<feature type="repeat" description="PC 9">
    <location>
        <begin position="696"/>
        <end position="736"/>
    </location>
</feature>
<feature type="repeat" description="PC 10">
    <location>
        <begin position="739"/>
        <end position="771"/>
    </location>
</feature>
<feature type="region of interest" description="Disordered" evidence="2">
    <location>
        <begin position="858"/>
        <end position="905"/>
    </location>
</feature>
<feature type="region of interest" description="Disordered" evidence="2">
    <location>
        <begin position="959"/>
        <end position="1004"/>
    </location>
</feature>
<feature type="compositionally biased region" description="Low complexity" evidence="2">
    <location>
        <begin position="965"/>
        <end position="987"/>
    </location>
</feature>
<feature type="modified residue" description="N-acetylalanine" evidence="9">
    <location>
        <position position="2"/>
    </location>
</feature>
<feature type="modified residue" description="Phosphoserine" evidence="6 7 8">
    <location>
        <position position="896"/>
    </location>
</feature>
<feature type="cross-link" description="Glycyl lysine isopeptide (Lys-Gly) (interchain with G-Cter in ubiquitin)" evidence="4">
    <location>
        <position position="166"/>
    </location>
</feature>
<feature type="sequence conflict" description="In Ref. 1; AAP86657." evidence="5" ref="1">
    <original>S</original>
    <variation>G</variation>
    <location>
        <position position="45"/>
    </location>
</feature>
<feature type="sequence conflict" description="In Ref. 5; BAD93983." evidence="5" ref="5">
    <original>I</original>
    <variation>L</variation>
    <location>
        <position position="741"/>
    </location>
</feature>
<feature type="sequence conflict" description="In Ref. 5; BAD93983." evidence="5" ref="5">
    <original>N</original>
    <variation>S</variation>
    <location>
        <position position="753"/>
    </location>
</feature>
<feature type="sequence conflict" description="In Ref. 1; AAP86657." evidence="5" ref="1">
    <original>T</original>
    <variation>I</variation>
    <location>
        <position position="831"/>
    </location>
</feature>
<evidence type="ECO:0000250" key="1"/>
<evidence type="ECO:0000256" key="2">
    <source>
        <dbReference type="SAM" id="MobiDB-lite"/>
    </source>
</evidence>
<evidence type="ECO:0000269" key="3">
    <source>
    </source>
</evidence>
<evidence type="ECO:0000269" key="4">
    <source>
    </source>
</evidence>
<evidence type="ECO:0000305" key="5"/>
<evidence type="ECO:0007744" key="6">
    <source>
    </source>
</evidence>
<evidence type="ECO:0007744" key="7">
    <source>
    </source>
</evidence>
<evidence type="ECO:0007744" key="8">
    <source>
    </source>
</evidence>
<evidence type="ECO:0007744" key="9">
    <source>
    </source>
</evidence>
<proteinExistence type="evidence at protein level"/>
<organism>
    <name type="scientific">Arabidopsis thaliana</name>
    <name type="common">Mouse-ear cress</name>
    <dbReference type="NCBI Taxonomy" id="3702"/>
    <lineage>
        <taxon>Eukaryota</taxon>
        <taxon>Viridiplantae</taxon>
        <taxon>Streptophyta</taxon>
        <taxon>Embryophyta</taxon>
        <taxon>Tracheophyta</taxon>
        <taxon>Spermatophyta</taxon>
        <taxon>Magnoliopsida</taxon>
        <taxon>eudicotyledons</taxon>
        <taxon>Gunneridae</taxon>
        <taxon>Pentapetalae</taxon>
        <taxon>rosids</taxon>
        <taxon>malvids</taxon>
        <taxon>Brassicales</taxon>
        <taxon>Brassicaceae</taxon>
        <taxon>Camelineae</taxon>
        <taxon>Arabidopsis</taxon>
    </lineage>
</organism>
<protein>
    <recommendedName>
        <fullName>26S proteasome non-ATPase regulatory subunit 1 homolog A</fullName>
    </recommendedName>
    <alternativeName>
        <fullName>26S proteasome regulatory subunit RPN2a</fullName>
        <shortName>AtRPN2a</shortName>
    </alternativeName>
    <alternativeName>
        <fullName>26S proteasome regulatory subunit S1 homolog A</fullName>
    </alternativeName>
</protein>
<sequence length="1004" mass="108977">MATPMVSSAGGLLAMLNEPHPVLKLHALSNLNNLVDQFWPEISTSVPIIESLYEDEEFDLHQRQLAALLVSKVFYYLGELNDSLSYALGAGPLFDVSEDSDYVHTLLAKAIDEYASLRSKAVESNEMVDIDPRLEAIVERMLGKCISDGKYQQAMGIAIECRRLDKLEEAIIKSDNVQGTLSYCINVSHSFVNRREYRHEVLSLLVKVYQKLPSPDYLSICQCLMFLDEPQGVASILEKLLRSENKDDALLALQIAFDLVENEHQAFLLSVRDRLPAPKTRAVEATQAVETTIAPNENPSGDVQMADETPAQTIVHETDPVDATYAERLTKIKGILSGETSIQLTLQFLYSHNKSDLLILKTIKQSVEMRNSVCHSATIYANAIMHAGTTVDTFLRENLDWLSRATNWAKFSATAGLGVIHRGHLQQGRSLMAPYLPQGGAGGGGSPYSEGGALYALGLIHANHGEGIKQFLRDSLRSTNVEVIQHGACLGLGLSALGTADEEIYDDVKSVLYTDSAVAGEAAGISMGLLLVGTATEKASEMLAYAHETQHEKIIRGLALGIALTVYGREEGADTLIEQMTRDQDPIIRYGGMYALALAYSGTANNKAIRQLLHFAVSDVSDDVRRTAVLALGFVLYSDPEQTPRIVSLLSESYNPHVRYGAALAVGISCAGTGLSEAISLLEPLTSDVVDFVRQGALIAMAMVMVQISEASDSRVGVFRRQLEKIILDKHEDTMSKMGAILASGILDAGGRNVTIRLLSKTKHDKVTAVIGLAVFSQFWYWYPLIYFISLAFSPTAFIGLNYDLKVPKFEFMSHAKPSLFEYPKPTTVPTANTAVKLPTAVLSTSVKAKARAKKEAEQKAIAEKTSGPEKPVNESGSGKGKASTEKEGDSMQVDSPAAVEKKAPEPEPAFEILVNPARVVPAQEKYIKLLDDSRYVPVKLAPSGFVLLKDLREHEPEVLSLTDAPTSTASPATGTAAAAQGTPASAMAVDDEPQPPQAFEYAS</sequence>
<keyword id="KW-0007">Acetylation</keyword>
<keyword id="KW-1017">Isopeptide bond</keyword>
<keyword id="KW-0597">Phosphoprotein</keyword>
<keyword id="KW-0647">Proteasome</keyword>
<keyword id="KW-1185">Reference proteome</keyword>
<keyword id="KW-0677">Repeat</keyword>
<keyword id="KW-0832">Ubl conjugation</keyword>